<organism>
    <name type="scientific">Campylobacter jejuni subsp. jejuni serotype O:6 (strain 81116 / NCTC 11828)</name>
    <dbReference type="NCBI Taxonomy" id="407148"/>
    <lineage>
        <taxon>Bacteria</taxon>
        <taxon>Pseudomonadati</taxon>
        <taxon>Campylobacterota</taxon>
        <taxon>Epsilonproteobacteria</taxon>
        <taxon>Campylobacterales</taxon>
        <taxon>Campylobacteraceae</taxon>
        <taxon>Campylobacter</taxon>
    </lineage>
</organism>
<sequence length="208" mass="23313">MKNIHCINHPLIEHKLGILRAKETKPFQFRMLIDEISSFLLFEASKDFSLKEIEISTPIQKTTVKKLDEKIMICPILRAALGMLESVFKMIPDASVGFLGFVRNEETLKADFYFQKLPKDAKKRTAIVIDPMFATGGTAIEACNFLKSQGVKKIKFISILAAPQGLKKFSQMHDDVEVFVACIDEGLNEKGYIIPGLGDAGDRVFNTL</sequence>
<dbReference type="EC" id="2.4.2.9" evidence="1"/>
<dbReference type="EMBL" id="CP000814">
    <property type="protein sequence ID" value="ABV52828.1"/>
    <property type="molecule type" value="Genomic_DNA"/>
</dbReference>
<dbReference type="RefSeq" id="WP_002831283.1">
    <property type="nucleotide sequence ID" value="NC_009839.1"/>
</dbReference>
<dbReference type="SMR" id="A8FMZ1"/>
<dbReference type="KEGG" id="cju:C8J_1229"/>
<dbReference type="HOGENOM" id="CLU_067096_2_2_7"/>
<dbReference type="UniPathway" id="UPA00574">
    <property type="reaction ID" value="UER00636"/>
</dbReference>
<dbReference type="GO" id="GO:0005525">
    <property type="term" value="F:GTP binding"/>
    <property type="evidence" value="ECO:0007669"/>
    <property type="project" value="UniProtKB-KW"/>
</dbReference>
<dbReference type="GO" id="GO:0000287">
    <property type="term" value="F:magnesium ion binding"/>
    <property type="evidence" value="ECO:0007669"/>
    <property type="project" value="UniProtKB-UniRule"/>
</dbReference>
<dbReference type="GO" id="GO:0004845">
    <property type="term" value="F:uracil phosphoribosyltransferase activity"/>
    <property type="evidence" value="ECO:0007669"/>
    <property type="project" value="UniProtKB-UniRule"/>
</dbReference>
<dbReference type="GO" id="GO:0044206">
    <property type="term" value="P:UMP salvage"/>
    <property type="evidence" value="ECO:0007669"/>
    <property type="project" value="UniProtKB-UniRule"/>
</dbReference>
<dbReference type="GO" id="GO:0006223">
    <property type="term" value="P:uracil salvage"/>
    <property type="evidence" value="ECO:0007669"/>
    <property type="project" value="InterPro"/>
</dbReference>
<dbReference type="CDD" id="cd06223">
    <property type="entry name" value="PRTases_typeI"/>
    <property type="match status" value="1"/>
</dbReference>
<dbReference type="FunFam" id="3.40.50.2020:FF:000003">
    <property type="entry name" value="Uracil phosphoribosyltransferase"/>
    <property type="match status" value="1"/>
</dbReference>
<dbReference type="Gene3D" id="3.40.50.2020">
    <property type="match status" value="1"/>
</dbReference>
<dbReference type="HAMAP" id="MF_01218_B">
    <property type="entry name" value="Upp_B"/>
    <property type="match status" value="1"/>
</dbReference>
<dbReference type="InterPro" id="IPR000836">
    <property type="entry name" value="PRibTrfase_dom"/>
</dbReference>
<dbReference type="InterPro" id="IPR029057">
    <property type="entry name" value="PRTase-like"/>
</dbReference>
<dbReference type="InterPro" id="IPR034332">
    <property type="entry name" value="Upp_B"/>
</dbReference>
<dbReference type="InterPro" id="IPR050054">
    <property type="entry name" value="UPRTase/APRTase"/>
</dbReference>
<dbReference type="InterPro" id="IPR005765">
    <property type="entry name" value="Ura_phspho_trans"/>
</dbReference>
<dbReference type="NCBIfam" id="NF001097">
    <property type="entry name" value="PRK00129.1"/>
    <property type="match status" value="1"/>
</dbReference>
<dbReference type="NCBIfam" id="TIGR01091">
    <property type="entry name" value="upp"/>
    <property type="match status" value="1"/>
</dbReference>
<dbReference type="PANTHER" id="PTHR32315">
    <property type="entry name" value="ADENINE PHOSPHORIBOSYLTRANSFERASE"/>
    <property type="match status" value="1"/>
</dbReference>
<dbReference type="PANTHER" id="PTHR32315:SF4">
    <property type="entry name" value="URACIL PHOSPHORIBOSYLTRANSFERASE, CHLOROPLASTIC"/>
    <property type="match status" value="1"/>
</dbReference>
<dbReference type="Pfam" id="PF14681">
    <property type="entry name" value="UPRTase"/>
    <property type="match status" value="1"/>
</dbReference>
<dbReference type="SUPFAM" id="SSF53271">
    <property type="entry name" value="PRTase-like"/>
    <property type="match status" value="1"/>
</dbReference>
<feature type="chain" id="PRO_1000073128" description="Uracil phosphoribosyltransferase">
    <location>
        <begin position="1"/>
        <end position="208"/>
    </location>
</feature>
<feature type="binding site" evidence="1">
    <location>
        <position position="78"/>
    </location>
    <ligand>
        <name>5-phospho-alpha-D-ribose 1-diphosphate</name>
        <dbReference type="ChEBI" id="CHEBI:58017"/>
    </ligand>
</feature>
<feature type="binding site" evidence="1">
    <location>
        <position position="103"/>
    </location>
    <ligand>
        <name>5-phospho-alpha-D-ribose 1-diphosphate</name>
        <dbReference type="ChEBI" id="CHEBI:58017"/>
    </ligand>
</feature>
<feature type="binding site" evidence="1">
    <location>
        <begin position="130"/>
        <end position="138"/>
    </location>
    <ligand>
        <name>5-phospho-alpha-D-ribose 1-diphosphate</name>
        <dbReference type="ChEBI" id="CHEBI:58017"/>
    </ligand>
</feature>
<feature type="binding site" evidence="1">
    <location>
        <position position="193"/>
    </location>
    <ligand>
        <name>uracil</name>
        <dbReference type="ChEBI" id="CHEBI:17568"/>
    </ligand>
</feature>
<feature type="binding site" evidence="1">
    <location>
        <begin position="198"/>
        <end position="200"/>
    </location>
    <ligand>
        <name>uracil</name>
        <dbReference type="ChEBI" id="CHEBI:17568"/>
    </ligand>
</feature>
<feature type="binding site" evidence="1">
    <location>
        <position position="199"/>
    </location>
    <ligand>
        <name>5-phospho-alpha-D-ribose 1-diphosphate</name>
        <dbReference type="ChEBI" id="CHEBI:58017"/>
    </ligand>
</feature>
<reference key="1">
    <citation type="journal article" date="2007" name="J. Bacteriol.">
        <title>The complete genome sequence of Campylobacter jejuni strain 81116 (NCTC11828).</title>
        <authorList>
            <person name="Pearson B.M."/>
            <person name="Gaskin D.J.H."/>
            <person name="Segers R.P.A.M."/>
            <person name="Wells J.M."/>
            <person name="Nuijten P.J.M."/>
            <person name="van Vliet A.H.M."/>
        </authorList>
    </citation>
    <scope>NUCLEOTIDE SEQUENCE [LARGE SCALE GENOMIC DNA]</scope>
    <source>
        <strain>81116 / NCTC 11828</strain>
    </source>
</reference>
<comment type="function">
    <text evidence="1">Catalyzes the conversion of uracil and 5-phospho-alpha-D-ribose 1-diphosphate (PRPP) to UMP and diphosphate.</text>
</comment>
<comment type="catalytic activity">
    <reaction evidence="1">
        <text>UMP + diphosphate = 5-phospho-alpha-D-ribose 1-diphosphate + uracil</text>
        <dbReference type="Rhea" id="RHEA:13017"/>
        <dbReference type="ChEBI" id="CHEBI:17568"/>
        <dbReference type="ChEBI" id="CHEBI:33019"/>
        <dbReference type="ChEBI" id="CHEBI:57865"/>
        <dbReference type="ChEBI" id="CHEBI:58017"/>
        <dbReference type="EC" id="2.4.2.9"/>
    </reaction>
</comment>
<comment type="cofactor">
    <cofactor evidence="1">
        <name>Mg(2+)</name>
        <dbReference type="ChEBI" id="CHEBI:18420"/>
    </cofactor>
    <text evidence="1">Binds 1 Mg(2+) ion per subunit. The magnesium is bound as Mg-PRPP.</text>
</comment>
<comment type="activity regulation">
    <text evidence="1">Allosterically activated by GTP.</text>
</comment>
<comment type="pathway">
    <text evidence="1">Pyrimidine metabolism; UMP biosynthesis via salvage pathway; UMP from uracil: step 1/1.</text>
</comment>
<comment type="similarity">
    <text evidence="1">Belongs to the UPRTase family.</text>
</comment>
<evidence type="ECO:0000255" key="1">
    <source>
        <dbReference type="HAMAP-Rule" id="MF_01218"/>
    </source>
</evidence>
<name>UPP_CAMJ8</name>
<accession>A8FMZ1</accession>
<proteinExistence type="inferred from homology"/>
<protein>
    <recommendedName>
        <fullName evidence="1">Uracil phosphoribosyltransferase</fullName>
        <ecNumber evidence="1">2.4.2.9</ecNumber>
    </recommendedName>
    <alternativeName>
        <fullName evidence="1">UMP pyrophosphorylase</fullName>
    </alternativeName>
    <alternativeName>
        <fullName evidence="1">UPRTase</fullName>
    </alternativeName>
</protein>
<keyword id="KW-0021">Allosteric enzyme</keyword>
<keyword id="KW-0328">Glycosyltransferase</keyword>
<keyword id="KW-0342">GTP-binding</keyword>
<keyword id="KW-0460">Magnesium</keyword>
<keyword id="KW-0547">Nucleotide-binding</keyword>
<keyword id="KW-0808">Transferase</keyword>
<gene>
    <name evidence="1" type="primary">upp</name>
    <name type="ordered locus">C8J_1229</name>
</gene>